<proteinExistence type="inferred from homology"/>
<protein>
    <recommendedName>
        <fullName evidence="1">Small ribosomal subunit protein uS19</fullName>
    </recommendedName>
    <alternativeName>
        <fullName evidence="2">30S ribosomal protein S19</fullName>
    </alternativeName>
</protein>
<reference key="1">
    <citation type="submission" date="2008-05" db="EMBL/GenBank/DDBJ databases">
        <title>Genome sequence of Clostridium botulinum Ba4 strain 657.</title>
        <authorList>
            <person name="Shrivastava S."/>
            <person name="Brown J.L."/>
            <person name="Bruce D."/>
            <person name="Detter C."/>
            <person name="Munk C."/>
            <person name="Smith L.A."/>
            <person name="Smith T.J."/>
            <person name="Sutton G."/>
            <person name="Brettin T.S."/>
        </authorList>
    </citation>
    <scope>NUCLEOTIDE SEQUENCE [LARGE SCALE GENOMIC DNA]</scope>
    <source>
        <strain>657 / Type Ba4</strain>
    </source>
</reference>
<feature type="chain" id="PRO_1000211797" description="Small ribosomal subunit protein uS19">
    <location>
        <begin position="1"/>
        <end position="94"/>
    </location>
</feature>
<keyword id="KW-0687">Ribonucleoprotein</keyword>
<keyword id="KW-0689">Ribosomal protein</keyword>
<keyword id="KW-0694">RNA-binding</keyword>
<keyword id="KW-0699">rRNA-binding</keyword>
<sequence length="94" mass="10908">MSRSVKKGPYIQEVLLKRINEMNKNGEKKVLKTWSRSSTIFPQMIGHTIAVHDGRKHVPVYITEDMVGHKLGEFVLTRTYRGHDDKSEKSSRLR</sequence>
<evidence type="ECO:0000255" key="1">
    <source>
        <dbReference type="HAMAP-Rule" id="MF_00531"/>
    </source>
</evidence>
<evidence type="ECO:0000305" key="2"/>
<comment type="function">
    <text evidence="1">Protein S19 forms a complex with S13 that binds strongly to the 16S ribosomal RNA.</text>
</comment>
<comment type="similarity">
    <text evidence="1">Belongs to the universal ribosomal protein uS19 family.</text>
</comment>
<gene>
    <name evidence="1" type="primary">rpsS</name>
    <name type="ordered locus">CLJ_B3785</name>
</gene>
<dbReference type="EMBL" id="CP001083">
    <property type="protein sequence ID" value="ACQ53915.1"/>
    <property type="molecule type" value="Genomic_DNA"/>
</dbReference>
<dbReference type="RefSeq" id="WP_003360195.1">
    <property type="nucleotide sequence ID" value="NC_012658.1"/>
</dbReference>
<dbReference type="SMR" id="C3KVP7"/>
<dbReference type="KEGG" id="cbi:CLJ_B3785"/>
<dbReference type="HOGENOM" id="CLU_144911_0_1_9"/>
<dbReference type="Proteomes" id="UP000002333">
    <property type="component" value="Chromosome"/>
</dbReference>
<dbReference type="GO" id="GO:0005737">
    <property type="term" value="C:cytoplasm"/>
    <property type="evidence" value="ECO:0007669"/>
    <property type="project" value="UniProtKB-ARBA"/>
</dbReference>
<dbReference type="GO" id="GO:0015935">
    <property type="term" value="C:small ribosomal subunit"/>
    <property type="evidence" value="ECO:0007669"/>
    <property type="project" value="InterPro"/>
</dbReference>
<dbReference type="GO" id="GO:0019843">
    <property type="term" value="F:rRNA binding"/>
    <property type="evidence" value="ECO:0007669"/>
    <property type="project" value="UniProtKB-UniRule"/>
</dbReference>
<dbReference type="GO" id="GO:0003735">
    <property type="term" value="F:structural constituent of ribosome"/>
    <property type="evidence" value="ECO:0007669"/>
    <property type="project" value="InterPro"/>
</dbReference>
<dbReference type="GO" id="GO:0000028">
    <property type="term" value="P:ribosomal small subunit assembly"/>
    <property type="evidence" value="ECO:0007669"/>
    <property type="project" value="TreeGrafter"/>
</dbReference>
<dbReference type="GO" id="GO:0006412">
    <property type="term" value="P:translation"/>
    <property type="evidence" value="ECO:0007669"/>
    <property type="project" value="UniProtKB-UniRule"/>
</dbReference>
<dbReference type="FunFam" id="3.30.860.10:FF:000001">
    <property type="entry name" value="30S ribosomal protein S19"/>
    <property type="match status" value="1"/>
</dbReference>
<dbReference type="Gene3D" id="3.30.860.10">
    <property type="entry name" value="30s Ribosomal Protein S19, Chain A"/>
    <property type="match status" value="1"/>
</dbReference>
<dbReference type="HAMAP" id="MF_00531">
    <property type="entry name" value="Ribosomal_uS19"/>
    <property type="match status" value="1"/>
</dbReference>
<dbReference type="InterPro" id="IPR002222">
    <property type="entry name" value="Ribosomal_uS19"/>
</dbReference>
<dbReference type="InterPro" id="IPR005732">
    <property type="entry name" value="Ribosomal_uS19_bac-type"/>
</dbReference>
<dbReference type="InterPro" id="IPR020934">
    <property type="entry name" value="Ribosomal_uS19_CS"/>
</dbReference>
<dbReference type="InterPro" id="IPR023575">
    <property type="entry name" value="Ribosomal_uS19_SF"/>
</dbReference>
<dbReference type="NCBIfam" id="TIGR01050">
    <property type="entry name" value="rpsS_bact"/>
    <property type="match status" value="1"/>
</dbReference>
<dbReference type="PANTHER" id="PTHR11880">
    <property type="entry name" value="RIBOSOMAL PROTEIN S19P FAMILY MEMBER"/>
    <property type="match status" value="1"/>
</dbReference>
<dbReference type="PANTHER" id="PTHR11880:SF8">
    <property type="entry name" value="SMALL RIBOSOMAL SUBUNIT PROTEIN US19M"/>
    <property type="match status" value="1"/>
</dbReference>
<dbReference type="Pfam" id="PF00203">
    <property type="entry name" value="Ribosomal_S19"/>
    <property type="match status" value="1"/>
</dbReference>
<dbReference type="PIRSF" id="PIRSF002144">
    <property type="entry name" value="Ribosomal_S19"/>
    <property type="match status" value="1"/>
</dbReference>
<dbReference type="PRINTS" id="PR00975">
    <property type="entry name" value="RIBOSOMALS19"/>
</dbReference>
<dbReference type="SUPFAM" id="SSF54570">
    <property type="entry name" value="Ribosomal protein S19"/>
    <property type="match status" value="1"/>
</dbReference>
<dbReference type="PROSITE" id="PS00323">
    <property type="entry name" value="RIBOSOMAL_S19"/>
    <property type="match status" value="1"/>
</dbReference>
<organism>
    <name type="scientific">Clostridium botulinum (strain 657 / Type Ba4)</name>
    <dbReference type="NCBI Taxonomy" id="515621"/>
    <lineage>
        <taxon>Bacteria</taxon>
        <taxon>Bacillati</taxon>
        <taxon>Bacillota</taxon>
        <taxon>Clostridia</taxon>
        <taxon>Eubacteriales</taxon>
        <taxon>Clostridiaceae</taxon>
        <taxon>Clostridium</taxon>
    </lineage>
</organism>
<name>RS19_CLOB6</name>
<accession>C3KVP7</accession>